<name>RIMM_CHRVO</name>
<sequence length="169" mass="18546">MRDEDLVVMGFVRGAFGIKGWVKIHADTEYADGLFDYPTWWLGKNGSWKPYAFENGAVQPKALAAKLEGVDDRDAAEALRGTQIAIPRSELPEAGDGEYYWADLIGLSVVNQQGETLGKVDSLLETGANDVLVVKGGDGQQRLIPFVDQYVLEVVPAEGRILVDWGLDY</sequence>
<protein>
    <recommendedName>
        <fullName evidence="1">Ribosome maturation factor RimM</fullName>
    </recommendedName>
</protein>
<accession>Q7NRV6</accession>
<organism>
    <name type="scientific">Chromobacterium violaceum (strain ATCC 12472 / DSM 30191 / JCM 1249 / CCUG 213 / NBRC 12614 / NCIMB 9131 / NCTC 9757 / MK)</name>
    <dbReference type="NCBI Taxonomy" id="243365"/>
    <lineage>
        <taxon>Bacteria</taxon>
        <taxon>Pseudomonadati</taxon>
        <taxon>Pseudomonadota</taxon>
        <taxon>Betaproteobacteria</taxon>
        <taxon>Neisseriales</taxon>
        <taxon>Chromobacteriaceae</taxon>
        <taxon>Chromobacterium</taxon>
    </lineage>
</organism>
<reference key="1">
    <citation type="journal article" date="2003" name="Proc. Natl. Acad. Sci. U.S.A.">
        <title>The complete genome sequence of Chromobacterium violaceum reveals remarkable and exploitable bacterial adaptability.</title>
        <authorList>
            <person name="Vasconcelos A.T.R."/>
            <person name="de Almeida D.F."/>
            <person name="Hungria M."/>
            <person name="Guimaraes C.T."/>
            <person name="Antonio R.V."/>
            <person name="Almeida F.C."/>
            <person name="de Almeida L.G.P."/>
            <person name="de Almeida R."/>
            <person name="Alves-Gomes J.A."/>
            <person name="Andrade E.M."/>
            <person name="Araripe J."/>
            <person name="de Araujo M.F.F."/>
            <person name="Astolfi-Filho S."/>
            <person name="Azevedo V."/>
            <person name="Baptista A.J."/>
            <person name="Bataus L.A.M."/>
            <person name="Batista J.S."/>
            <person name="Belo A."/>
            <person name="van den Berg C."/>
            <person name="Bogo M."/>
            <person name="Bonatto S."/>
            <person name="Bordignon J."/>
            <person name="Brigido M.M."/>
            <person name="Brito C.A."/>
            <person name="Brocchi M."/>
            <person name="Burity H.A."/>
            <person name="Camargo A.A."/>
            <person name="Cardoso D.D.P."/>
            <person name="Carneiro N.P."/>
            <person name="Carraro D.M."/>
            <person name="Carvalho C.M.B."/>
            <person name="Cascardo J.C.M."/>
            <person name="Cavada B.S."/>
            <person name="Chueire L.M.O."/>
            <person name="Creczynski-Pasa T.B."/>
            <person name="Cunha-Junior N.C."/>
            <person name="Fagundes N."/>
            <person name="Falcao C.L."/>
            <person name="Fantinatti F."/>
            <person name="Farias I.P."/>
            <person name="Felipe M.S.S."/>
            <person name="Ferrari L.P."/>
            <person name="Ferro J.A."/>
            <person name="Ferro M.I.T."/>
            <person name="Franco G.R."/>
            <person name="Freitas N.S.A."/>
            <person name="Furlan L.R."/>
            <person name="Gazzinelli R.T."/>
            <person name="Gomes E.A."/>
            <person name="Goncalves P.R."/>
            <person name="Grangeiro T.B."/>
            <person name="Grattapaglia D."/>
            <person name="Grisard E.C."/>
            <person name="Hanna E.S."/>
            <person name="Jardim S.N."/>
            <person name="Laurino J."/>
            <person name="Leoi L.C.T."/>
            <person name="Lima L.F.A."/>
            <person name="Loureiro M.F."/>
            <person name="Lyra M.C.C.P."/>
            <person name="Madeira H.M.F."/>
            <person name="Manfio G.P."/>
            <person name="Maranhao A.Q."/>
            <person name="Martins W.S."/>
            <person name="di Mauro S.M.Z."/>
            <person name="de Medeiros S.R.B."/>
            <person name="Meissner R.V."/>
            <person name="Moreira M.A.M."/>
            <person name="Nascimento F.F."/>
            <person name="Nicolas M.F."/>
            <person name="Oliveira J.G."/>
            <person name="Oliveira S.C."/>
            <person name="Paixao R.F.C."/>
            <person name="Parente J.A."/>
            <person name="Pedrosa F.O."/>
            <person name="Pena S.D.J."/>
            <person name="Pereira J.O."/>
            <person name="Pereira M."/>
            <person name="Pinto L.S.R.C."/>
            <person name="Pinto L.S."/>
            <person name="Porto J.I.R."/>
            <person name="Potrich D.P."/>
            <person name="Ramalho-Neto C.E."/>
            <person name="Reis A.M.M."/>
            <person name="Rigo L.U."/>
            <person name="Rondinelli E."/>
            <person name="Santos E.B.P."/>
            <person name="Santos F.R."/>
            <person name="Schneider M.P.C."/>
            <person name="Seuanez H.N."/>
            <person name="Silva A.M.R."/>
            <person name="da Silva A.L.C."/>
            <person name="Silva D.W."/>
            <person name="Silva R."/>
            <person name="Simoes I.C."/>
            <person name="Simon D."/>
            <person name="Soares C.M.A."/>
            <person name="Soares R.B.A."/>
            <person name="Souza E.M."/>
            <person name="Souza K.R.L."/>
            <person name="Souza R.C."/>
            <person name="Steffens M.B.R."/>
            <person name="Steindel M."/>
            <person name="Teixeira S.R."/>
            <person name="Urmenyi T."/>
            <person name="Vettore A."/>
            <person name="Wassem R."/>
            <person name="Zaha A."/>
            <person name="Simpson A.J.G."/>
        </authorList>
    </citation>
    <scope>NUCLEOTIDE SEQUENCE [LARGE SCALE GENOMIC DNA]</scope>
    <source>
        <strain>ATCC 12472 / DSM 30191 / JCM 1249 / CCUG 213 / NBRC 12614 / NCIMB 9131 / NCTC 9757 / MK</strain>
    </source>
</reference>
<proteinExistence type="inferred from homology"/>
<feature type="chain" id="PRO_0000163276" description="Ribosome maturation factor RimM">
    <location>
        <begin position="1"/>
        <end position="169"/>
    </location>
</feature>
<feature type="domain" description="PRC barrel" evidence="1">
    <location>
        <begin position="96"/>
        <end position="169"/>
    </location>
</feature>
<evidence type="ECO:0000255" key="1">
    <source>
        <dbReference type="HAMAP-Rule" id="MF_00014"/>
    </source>
</evidence>
<gene>
    <name evidence="1" type="primary">rimM</name>
    <name type="ordered locus">CV_3674</name>
</gene>
<dbReference type="EMBL" id="AE016825">
    <property type="protein sequence ID" value="AAQ61336.1"/>
    <property type="molecule type" value="Genomic_DNA"/>
</dbReference>
<dbReference type="RefSeq" id="WP_011137221.1">
    <property type="nucleotide sequence ID" value="NC_005085.1"/>
</dbReference>
<dbReference type="SMR" id="Q7NRV6"/>
<dbReference type="STRING" id="243365.CV_3674"/>
<dbReference type="KEGG" id="cvi:CV_3674"/>
<dbReference type="eggNOG" id="COG0806">
    <property type="taxonomic scope" value="Bacteria"/>
</dbReference>
<dbReference type="HOGENOM" id="CLU_077636_1_0_4"/>
<dbReference type="OrthoDB" id="9783509at2"/>
<dbReference type="Proteomes" id="UP000001424">
    <property type="component" value="Chromosome"/>
</dbReference>
<dbReference type="GO" id="GO:0005737">
    <property type="term" value="C:cytoplasm"/>
    <property type="evidence" value="ECO:0007669"/>
    <property type="project" value="UniProtKB-SubCell"/>
</dbReference>
<dbReference type="GO" id="GO:0005840">
    <property type="term" value="C:ribosome"/>
    <property type="evidence" value="ECO:0007669"/>
    <property type="project" value="InterPro"/>
</dbReference>
<dbReference type="GO" id="GO:0043022">
    <property type="term" value="F:ribosome binding"/>
    <property type="evidence" value="ECO:0007669"/>
    <property type="project" value="InterPro"/>
</dbReference>
<dbReference type="GO" id="GO:0042274">
    <property type="term" value="P:ribosomal small subunit biogenesis"/>
    <property type="evidence" value="ECO:0007669"/>
    <property type="project" value="UniProtKB-UniRule"/>
</dbReference>
<dbReference type="GO" id="GO:0006364">
    <property type="term" value="P:rRNA processing"/>
    <property type="evidence" value="ECO:0007669"/>
    <property type="project" value="UniProtKB-UniRule"/>
</dbReference>
<dbReference type="Gene3D" id="2.30.30.240">
    <property type="entry name" value="PRC-barrel domain"/>
    <property type="match status" value="1"/>
</dbReference>
<dbReference type="Gene3D" id="2.40.30.60">
    <property type="entry name" value="RimM"/>
    <property type="match status" value="1"/>
</dbReference>
<dbReference type="HAMAP" id="MF_00014">
    <property type="entry name" value="Ribosome_mat_RimM"/>
    <property type="match status" value="1"/>
</dbReference>
<dbReference type="InterPro" id="IPR011033">
    <property type="entry name" value="PRC_barrel-like_sf"/>
</dbReference>
<dbReference type="InterPro" id="IPR056792">
    <property type="entry name" value="PRC_RimM"/>
</dbReference>
<dbReference type="InterPro" id="IPR011961">
    <property type="entry name" value="RimM"/>
</dbReference>
<dbReference type="InterPro" id="IPR002676">
    <property type="entry name" value="RimM_N"/>
</dbReference>
<dbReference type="InterPro" id="IPR036976">
    <property type="entry name" value="RimM_N_sf"/>
</dbReference>
<dbReference type="InterPro" id="IPR009000">
    <property type="entry name" value="Transl_B-barrel_sf"/>
</dbReference>
<dbReference type="NCBIfam" id="TIGR02273">
    <property type="entry name" value="16S_RimM"/>
    <property type="match status" value="1"/>
</dbReference>
<dbReference type="PANTHER" id="PTHR33692">
    <property type="entry name" value="RIBOSOME MATURATION FACTOR RIMM"/>
    <property type="match status" value="1"/>
</dbReference>
<dbReference type="PANTHER" id="PTHR33692:SF1">
    <property type="entry name" value="RIBOSOME MATURATION FACTOR RIMM"/>
    <property type="match status" value="1"/>
</dbReference>
<dbReference type="Pfam" id="PF24986">
    <property type="entry name" value="PRC_RimM"/>
    <property type="match status" value="1"/>
</dbReference>
<dbReference type="Pfam" id="PF01782">
    <property type="entry name" value="RimM"/>
    <property type="match status" value="1"/>
</dbReference>
<dbReference type="SUPFAM" id="SSF50346">
    <property type="entry name" value="PRC-barrel domain"/>
    <property type="match status" value="1"/>
</dbReference>
<dbReference type="SUPFAM" id="SSF50447">
    <property type="entry name" value="Translation proteins"/>
    <property type="match status" value="1"/>
</dbReference>
<keyword id="KW-0143">Chaperone</keyword>
<keyword id="KW-0963">Cytoplasm</keyword>
<keyword id="KW-1185">Reference proteome</keyword>
<keyword id="KW-0690">Ribosome biogenesis</keyword>
<keyword id="KW-0698">rRNA processing</keyword>
<comment type="function">
    <text evidence="1">An accessory protein needed during the final step in the assembly of 30S ribosomal subunit, possibly for assembly of the head region. Essential for efficient processing of 16S rRNA. May be needed both before and after RbfA during the maturation of 16S rRNA. It has affinity for free ribosomal 30S subunits but not for 70S ribosomes.</text>
</comment>
<comment type="subunit">
    <text evidence="1">Binds ribosomal protein uS19.</text>
</comment>
<comment type="subcellular location">
    <subcellularLocation>
        <location evidence="1">Cytoplasm</location>
    </subcellularLocation>
</comment>
<comment type="domain">
    <text evidence="1">The PRC barrel domain binds ribosomal protein uS19.</text>
</comment>
<comment type="similarity">
    <text evidence="1">Belongs to the RimM family.</text>
</comment>